<protein>
    <recommendedName>
        <fullName evidence="1">Fatty acid oxidation complex subunit alpha</fullName>
    </recommendedName>
    <domain>
        <recommendedName>
            <fullName evidence="1">Enoyl-CoA hydratase/Delta(3)-cis-Delta(2)-trans-enoyl-CoA isomerase/3-hydroxybutyryl-CoA epimerase</fullName>
            <ecNumber evidence="1">4.2.1.17</ecNumber>
            <ecNumber evidence="1">5.1.2.3</ecNumber>
            <ecNumber evidence="1">5.3.3.8</ecNumber>
        </recommendedName>
    </domain>
    <domain>
        <recommendedName>
            <fullName evidence="1">3-hydroxyacyl-CoA dehydrogenase</fullName>
            <ecNumber evidence="1">1.1.1.35</ecNumber>
        </recommendedName>
    </domain>
</protein>
<proteinExistence type="inferred from homology"/>
<keyword id="KW-0276">Fatty acid metabolism</keyword>
<keyword id="KW-0413">Isomerase</keyword>
<keyword id="KW-0442">Lipid degradation</keyword>
<keyword id="KW-0443">Lipid metabolism</keyword>
<keyword id="KW-0456">Lyase</keyword>
<keyword id="KW-0511">Multifunctional enzyme</keyword>
<keyword id="KW-0520">NAD</keyword>
<keyword id="KW-0560">Oxidoreductase</keyword>
<comment type="function">
    <text evidence="1">Involved in the aerobic and anaerobic degradation of long-chain fatty acids via beta-oxidation cycle. Catalyzes the formation of 3-oxoacyl-CoA from enoyl-CoA via L-3-hydroxyacyl-CoA. It can also use D-3-hydroxyacyl-CoA and cis-3-enoyl-CoA as substrate.</text>
</comment>
<comment type="catalytic activity">
    <reaction evidence="1">
        <text>a (3S)-3-hydroxyacyl-CoA + NAD(+) = a 3-oxoacyl-CoA + NADH + H(+)</text>
        <dbReference type="Rhea" id="RHEA:22432"/>
        <dbReference type="ChEBI" id="CHEBI:15378"/>
        <dbReference type="ChEBI" id="CHEBI:57318"/>
        <dbReference type="ChEBI" id="CHEBI:57540"/>
        <dbReference type="ChEBI" id="CHEBI:57945"/>
        <dbReference type="ChEBI" id="CHEBI:90726"/>
        <dbReference type="EC" id="1.1.1.35"/>
    </reaction>
</comment>
<comment type="catalytic activity">
    <reaction evidence="1">
        <text>a (3S)-3-hydroxyacyl-CoA = a (2E)-enoyl-CoA + H2O</text>
        <dbReference type="Rhea" id="RHEA:16105"/>
        <dbReference type="ChEBI" id="CHEBI:15377"/>
        <dbReference type="ChEBI" id="CHEBI:57318"/>
        <dbReference type="ChEBI" id="CHEBI:58856"/>
        <dbReference type="EC" id="4.2.1.17"/>
    </reaction>
</comment>
<comment type="catalytic activity">
    <reaction evidence="1">
        <text>a 4-saturated-(3S)-3-hydroxyacyl-CoA = a (3E)-enoyl-CoA + H2O</text>
        <dbReference type="Rhea" id="RHEA:20724"/>
        <dbReference type="ChEBI" id="CHEBI:15377"/>
        <dbReference type="ChEBI" id="CHEBI:58521"/>
        <dbReference type="ChEBI" id="CHEBI:137480"/>
        <dbReference type="EC" id="4.2.1.17"/>
    </reaction>
</comment>
<comment type="catalytic activity">
    <reaction evidence="1">
        <text>(3S)-3-hydroxybutanoyl-CoA = (3R)-3-hydroxybutanoyl-CoA</text>
        <dbReference type="Rhea" id="RHEA:21760"/>
        <dbReference type="ChEBI" id="CHEBI:57315"/>
        <dbReference type="ChEBI" id="CHEBI:57316"/>
        <dbReference type="EC" id="5.1.2.3"/>
    </reaction>
</comment>
<comment type="catalytic activity">
    <reaction evidence="1">
        <text>a (3Z)-enoyl-CoA = a 4-saturated (2E)-enoyl-CoA</text>
        <dbReference type="Rhea" id="RHEA:45900"/>
        <dbReference type="ChEBI" id="CHEBI:85097"/>
        <dbReference type="ChEBI" id="CHEBI:85489"/>
        <dbReference type="EC" id="5.3.3.8"/>
    </reaction>
</comment>
<comment type="catalytic activity">
    <reaction evidence="1">
        <text>a (3E)-enoyl-CoA = a 4-saturated (2E)-enoyl-CoA</text>
        <dbReference type="Rhea" id="RHEA:45228"/>
        <dbReference type="ChEBI" id="CHEBI:58521"/>
        <dbReference type="ChEBI" id="CHEBI:85097"/>
        <dbReference type="EC" id="5.3.3.8"/>
    </reaction>
</comment>
<comment type="pathway">
    <text evidence="1">Lipid metabolism; fatty acid beta-oxidation.</text>
</comment>
<comment type="subunit">
    <text evidence="1">Heterotetramer of two alpha chains (FadB) and two beta chains (FadA).</text>
</comment>
<comment type="similarity">
    <text evidence="1">In the N-terminal section; belongs to the enoyl-CoA hydratase/isomerase family.</text>
</comment>
<comment type="similarity">
    <text evidence="1">In the C-terminal section; belongs to the 3-hydroxyacyl-CoA dehydrogenase family.</text>
</comment>
<organism>
    <name type="scientific">Acinetobacter baumannii (strain AB0057)</name>
    <dbReference type="NCBI Taxonomy" id="480119"/>
    <lineage>
        <taxon>Bacteria</taxon>
        <taxon>Pseudomonadati</taxon>
        <taxon>Pseudomonadota</taxon>
        <taxon>Gammaproteobacteria</taxon>
        <taxon>Moraxellales</taxon>
        <taxon>Moraxellaceae</taxon>
        <taxon>Acinetobacter</taxon>
        <taxon>Acinetobacter calcoaceticus/baumannii complex</taxon>
    </lineage>
</organism>
<evidence type="ECO:0000255" key="1">
    <source>
        <dbReference type="HAMAP-Rule" id="MF_01621"/>
    </source>
</evidence>
<feature type="chain" id="PRO_1000186027" description="Fatty acid oxidation complex subunit alpha">
    <location>
        <begin position="1"/>
        <end position="717"/>
    </location>
</feature>
<feature type="region of interest" description="Enoyl-CoA hydratase/isomerase" evidence="1">
    <location>
        <begin position="1"/>
        <end position="190"/>
    </location>
</feature>
<feature type="region of interest" description="3-hydroxyacyl-CoA dehydrogenase" evidence="1">
    <location>
        <begin position="313"/>
        <end position="717"/>
    </location>
</feature>
<feature type="active site" description="For 3-hydroxyacyl-CoA dehydrogenase activity" evidence="1">
    <location>
        <position position="452"/>
    </location>
</feature>
<feature type="binding site" evidence="1">
    <location>
        <position position="298"/>
    </location>
    <ligand>
        <name>substrate</name>
    </ligand>
</feature>
<feature type="binding site" evidence="1">
    <location>
        <position position="326"/>
    </location>
    <ligand>
        <name>NAD(+)</name>
        <dbReference type="ChEBI" id="CHEBI:57540"/>
    </ligand>
</feature>
<feature type="binding site" evidence="1">
    <location>
        <position position="345"/>
    </location>
    <ligand>
        <name>NAD(+)</name>
        <dbReference type="ChEBI" id="CHEBI:57540"/>
    </ligand>
</feature>
<feature type="binding site" evidence="1">
    <location>
        <begin position="402"/>
        <end position="404"/>
    </location>
    <ligand>
        <name>NAD(+)</name>
        <dbReference type="ChEBI" id="CHEBI:57540"/>
    </ligand>
</feature>
<feature type="binding site" evidence="1">
    <location>
        <position position="409"/>
    </location>
    <ligand>
        <name>NAD(+)</name>
        <dbReference type="ChEBI" id="CHEBI:57540"/>
    </ligand>
</feature>
<feature type="binding site" evidence="1">
    <location>
        <position position="431"/>
    </location>
    <ligand>
        <name>NAD(+)</name>
        <dbReference type="ChEBI" id="CHEBI:57540"/>
    </ligand>
</feature>
<feature type="binding site" evidence="1">
    <location>
        <position position="455"/>
    </location>
    <ligand>
        <name>NAD(+)</name>
        <dbReference type="ChEBI" id="CHEBI:57540"/>
    </ligand>
</feature>
<feature type="binding site" evidence="1">
    <location>
        <position position="502"/>
    </location>
    <ligand>
        <name>substrate</name>
    </ligand>
</feature>
<feature type="site" description="Important for catalytic activity" evidence="1">
    <location>
        <position position="120"/>
    </location>
</feature>
<feature type="site" description="Important for catalytic activity" evidence="1">
    <location>
        <position position="140"/>
    </location>
</feature>
<reference key="1">
    <citation type="journal article" date="2008" name="J. Bacteriol.">
        <title>Comparative genome sequence analysis of multidrug-resistant Acinetobacter baumannii.</title>
        <authorList>
            <person name="Adams M.D."/>
            <person name="Goglin K."/>
            <person name="Molyneaux N."/>
            <person name="Hujer K.M."/>
            <person name="Lavender H."/>
            <person name="Jamison J.J."/>
            <person name="MacDonald I.J."/>
            <person name="Martin K.M."/>
            <person name="Russo T."/>
            <person name="Campagnari A.A."/>
            <person name="Hujer A.M."/>
            <person name="Bonomo R.A."/>
            <person name="Gill S.R."/>
        </authorList>
    </citation>
    <scope>NUCLEOTIDE SEQUENCE [LARGE SCALE GENOMIC DNA]</scope>
    <source>
        <strain>AB0057</strain>
    </source>
</reference>
<dbReference type="EC" id="4.2.1.17" evidence="1"/>
<dbReference type="EC" id="5.1.2.3" evidence="1"/>
<dbReference type="EC" id="5.3.3.8" evidence="1"/>
<dbReference type="EC" id="1.1.1.35" evidence="1"/>
<dbReference type="EMBL" id="CP001182">
    <property type="protein sequence ID" value="ACJ39813.1"/>
    <property type="molecule type" value="Genomic_DNA"/>
</dbReference>
<dbReference type="RefSeq" id="WP_000580942.1">
    <property type="nucleotide sequence ID" value="NC_011586.2"/>
</dbReference>
<dbReference type="SMR" id="B7I3P1"/>
<dbReference type="KEGG" id="abn:AB57_0387"/>
<dbReference type="HOGENOM" id="CLU_009834_16_3_6"/>
<dbReference type="UniPathway" id="UPA00659"/>
<dbReference type="Proteomes" id="UP000007094">
    <property type="component" value="Chromosome"/>
</dbReference>
<dbReference type="GO" id="GO:0036125">
    <property type="term" value="C:fatty acid beta-oxidation multienzyme complex"/>
    <property type="evidence" value="ECO:0007669"/>
    <property type="project" value="InterPro"/>
</dbReference>
<dbReference type="GO" id="GO:0008692">
    <property type="term" value="F:3-hydroxybutyryl-CoA epimerase activity"/>
    <property type="evidence" value="ECO:0007669"/>
    <property type="project" value="UniProtKB-UniRule"/>
</dbReference>
<dbReference type="GO" id="GO:0004165">
    <property type="term" value="F:delta(3)-delta(2)-enoyl-CoA isomerase activity"/>
    <property type="evidence" value="ECO:0007669"/>
    <property type="project" value="UniProtKB-UniRule"/>
</dbReference>
<dbReference type="GO" id="GO:0004300">
    <property type="term" value="F:enoyl-CoA hydratase activity"/>
    <property type="evidence" value="ECO:0007669"/>
    <property type="project" value="UniProtKB-UniRule"/>
</dbReference>
<dbReference type="GO" id="GO:0016509">
    <property type="term" value="F:long-chain-3-hydroxyacyl-CoA dehydrogenase activity"/>
    <property type="evidence" value="ECO:0007669"/>
    <property type="project" value="TreeGrafter"/>
</dbReference>
<dbReference type="GO" id="GO:0070403">
    <property type="term" value="F:NAD+ binding"/>
    <property type="evidence" value="ECO:0007669"/>
    <property type="project" value="InterPro"/>
</dbReference>
<dbReference type="GO" id="GO:0006635">
    <property type="term" value="P:fatty acid beta-oxidation"/>
    <property type="evidence" value="ECO:0007669"/>
    <property type="project" value="UniProtKB-UniRule"/>
</dbReference>
<dbReference type="CDD" id="cd06558">
    <property type="entry name" value="crotonase-like"/>
    <property type="match status" value="1"/>
</dbReference>
<dbReference type="FunFam" id="3.40.50.720:FF:000009">
    <property type="entry name" value="Fatty oxidation complex, alpha subunit"/>
    <property type="match status" value="1"/>
</dbReference>
<dbReference type="Gene3D" id="1.10.1040.50">
    <property type="match status" value="1"/>
</dbReference>
<dbReference type="Gene3D" id="3.90.226.10">
    <property type="entry name" value="2-enoyl-CoA Hydratase, Chain A, domain 1"/>
    <property type="match status" value="1"/>
</dbReference>
<dbReference type="Gene3D" id="3.40.50.720">
    <property type="entry name" value="NAD(P)-binding Rossmann-like Domain"/>
    <property type="match status" value="1"/>
</dbReference>
<dbReference type="HAMAP" id="MF_01621">
    <property type="entry name" value="FadB"/>
    <property type="match status" value="1"/>
</dbReference>
<dbReference type="InterPro" id="IPR006180">
    <property type="entry name" value="3-OHacyl-CoA_DH_CS"/>
</dbReference>
<dbReference type="InterPro" id="IPR006176">
    <property type="entry name" value="3-OHacyl-CoA_DH_NAD-bd"/>
</dbReference>
<dbReference type="InterPro" id="IPR006108">
    <property type="entry name" value="3HC_DH_C"/>
</dbReference>
<dbReference type="InterPro" id="IPR008927">
    <property type="entry name" value="6-PGluconate_DH-like_C_sf"/>
</dbReference>
<dbReference type="InterPro" id="IPR029045">
    <property type="entry name" value="ClpP/crotonase-like_dom_sf"/>
</dbReference>
<dbReference type="InterPro" id="IPR018376">
    <property type="entry name" value="Enoyl-CoA_hyd/isom_CS"/>
</dbReference>
<dbReference type="InterPro" id="IPR001753">
    <property type="entry name" value="Enoyl-CoA_hydra/iso"/>
</dbReference>
<dbReference type="InterPro" id="IPR050136">
    <property type="entry name" value="FA_oxidation_alpha_subunit"/>
</dbReference>
<dbReference type="InterPro" id="IPR012799">
    <property type="entry name" value="FadB"/>
</dbReference>
<dbReference type="InterPro" id="IPR036291">
    <property type="entry name" value="NAD(P)-bd_dom_sf"/>
</dbReference>
<dbReference type="NCBIfam" id="TIGR02437">
    <property type="entry name" value="FadB"/>
    <property type="match status" value="1"/>
</dbReference>
<dbReference type="NCBIfam" id="NF008727">
    <property type="entry name" value="PRK11730.1"/>
    <property type="match status" value="1"/>
</dbReference>
<dbReference type="PANTHER" id="PTHR43612">
    <property type="entry name" value="TRIFUNCTIONAL ENZYME SUBUNIT ALPHA"/>
    <property type="match status" value="1"/>
</dbReference>
<dbReference type="PANTHER" id="PTHR43612:SF3">
    <property type="entry name" value="TRIFUNCTIONAL ENZYME SUBUNIT ALPHA, MITOCHONDRIAL"/>
    <property type="match status" value="1"/>
</dbReference>
<dbReference type="Pfam" id="PF00725">
    <property type="entry name" value="3HCDH"/>
    <property type="match status" value="1"/>
</dbReference>
<dbReference type="Pfam" id="PF02737">
    <property type="entry name" value="3HCDH_N"/>
    <property type="match status" value="1"/>
</dbReference>
<dbReference type="Pfam" id="PF00378">
    <property type="entry name" value="ECH_1"/>
    <property type="match status" value="1"/>
</dbReference>
<dbReference type="SUPFAM" id="SSF48179">
    <property type="entry name" value="6-phosphogluconate dehydrogenase C-terminal domain-like"/>
    <property type="match status" value="2"/>
</dbReference>
<dbReference type="SUPFAM" id="SSF52096">
    <property type="entry name" value="ClpP/crotonase"/>
    <property type="match status" value="1"/>
</dbReference>
<dbReference type="SUPFAM" id="SSF51735">
    <property type="entry name" value="NAD(P)-binding Rossmann-fold domains"/>
    <property type="match status" value="1"/>
</dbReference>
<dbReference type="PROSITE" id="PS00067">
    <property type="entry name" value="3HCDH"/>
    <property type="match status" value="1"/>
</dbReference>
<dbReference type="PROSITE" id="PS00166">
    <property type="entry name" value="ENOYL_COA_HYDRATASE"/>
    <property type="match status" value="1"/>
</dbReference>
<name>FADB_ACIB5</name>
<gene>
    <name evidence="1" type="primary">fadB</name>
    <name type="ordered locus">AB57_0387</name>
</gene>
<accession>B7I3P1</accession>
<sequence length="717" mass="77874">MIHAGNAITVQMLADGIAEFRFDLQGESVNKFNRATIEDFKAAIAAVKANNDIKGLVVTSGKSTFIVGADITEFGQNFAQGEKAIVDWLMPVHEIFNSFEDLDLPKVAAINGMALGGGFEMCLVCDYRVMSEAAQVGLPEIKLGIYPGFGGSVRLSRLIGIDNAVEWMAMATPKKPAAALKDGAVDAVVAADKLLDAATDLVKQAISGRLNWKAKRQEKLEAVKLNPLEQMMAFNTAKGAVLAKANPAQYPAPKLLLDSLQAGASLARDEALKAEAEGFAKAAVTPQAEALIGLFINDQVVKKASKQHEKGAHPVNQAAVLGAGIMGGGIAYQAASKGTPIIMKDIGNPQLALGMKEANNLLTKQVERKKMKPVQMGETLARIRPTLSYEEFKEVDIVIEAVTENPKVKEIVLAETEKNVRENTIIASNTSTISITRLAKALQRPENFVGMHFFNPVHMMPLVEVIRGEKTSEEAIATTVVLAQKMGKTPIVVNDCPGFLVNRVLFPYFGAFDLLVKDGADFQQIDNVMSKFGWPMGPAYLIDVVGIDTGVHGAEVMAEGFPDRMKPDYKGAIEAMYEAKRLGQKNDVGFYKYELDKKGKKAKTVDPTAYEVIAPFVTGEKREFDNQEIIDRMMLALCNETVRCLEDNIVATASEADMAMIMGIGFPPFRGGPCRYIDQTGVAEYVALCDKYAHLGKAYEAPQMLRDMAANNKKFYG</sequence>